<feature type="chain" id="PRO_0000360850" description="Mycosubtilin synthase subunit C">
    <location>
        <begin position="1"/>
        <end position="2609"/>
    </location>
</feature>
<feature type="domain" description="Carrier 1" evidence="1">
    <location>
        <begin position="771"/>
        <end position="845"/>
    </location>
</feature>
<feature type="domain" description="Carrier 2" evidence="1">
    <location>
        <begin position="2282"/>
        <end position="2357"/>
    </location>
</feature>
<feature type="region of interest" description="Domain 1 (D-serine-activating)">
    <location>
        <begin position="258"/>
        <end position="1628"/>
    </location>
</feature>
<feature type="region of interest" description="Adenylation 1">
    <location>
        <begin position="288"/>
        <end position="695"/>
    </location>
</feature>
<feature type="region of interest" description="Epimerization 1">
    <location>
        <begin position="853"/>
        <end position="1312"/>
    </location>
</feature>
<feature type="region of interest" description="Condensation 1">
    <location>
        <begin position="1322"/>
        <end position="1623"/>
    </location>
</feature>
<feature type="region of interest" description="Domain 2 (isoleucine-activating)">
    <location>
        <begin position="1778"/>
        <end position="2359"/>
    </location>
</feature>
<feature type="region of interest" description="Adenylation 2">
    <location>
        <begin position="1808"/>
        <end position="2205"/>
    </location>
</feature>
<feature type="region of interest" description="Thioesterase">
    <location>
        <begin position="2375"/>
        <end position="2581"/>
    </location>
</feature>
<feature type="modified residue" description="O-(pantetheine 4'-phosphoryl)serine" evidence="1">
    <location>
        <position position="806"/>
    </location>
</feature>
<feature type="modified residue" description="O-(pantetheine 4'-phosphoryl)serine" evidence="1">
    <location>
        <position position="2317"/>
    </location>
</feature>
<proteinExistence type="inferred from homology"/>
<organism>
    <name type="scientific">Bacillus subtilis</name>
    <dbReference type="NCBI Taxonomy" id="1423"/>
    <lineage>
        <taxon>Bacteria</taxon>
        <taxon>Bacillati</taxon>
        <taxon>Bacillota</taxon>
        <taxon>Bacilli</taxon>
        <taxon>Bacillales</taxon>
        <taxon>Bacillaceae</taxon>
        <taxon>Bacillus</taxon>
    </lineage>
</organism>
<protein>
    <recommendedName>
        <fullName>Mycosubtilin synthase subunit C</fullName>
        <ecNumber>2.3.1.-</ecNumber>
    </recommendedName>
    <domain>
        <recommendedName>
            <fullName>ATP-dependent serine adenylase</fullName>
            <shortName>SerA</shortName>
        </recommendedName>
        <alternativeName>
            <fullName>Serine activase</fullName>
        </alternativeName>
    </domain>
    <domain>
        <recommendedName>
            <fullName>ATP-dependent asparagine adenylase 3</fullName>
            <shortName>AsnA 3</shortName>
        </recommendedName>
        <alternativeName>
            <fullName>Asparagine activase 3</fullName>
        </alternativeName>
    </domain>
</protein>
<reference key="1">
    <citation type="journal article" date="1999" name="Proc. Natl. Acad. Sci. U.S.A.">
        <title>The mycosubtilin synthetase of Bacillus subtilis ATCC6633: a multifunctional hybrid between a peptide synthetase, an amino transferase, and a fatty acid synthase.</title>
        <authorList>
            <person name="Duitman E.H."/>
            <person name="Hamoen L.W."/>
            <person name="Rembold M."/>
            <person name="Venema G."/>
            <person name="Seitz H."/>
            <person name="Saenger W."/>
            <person name="Bernhard F."/>
            <person name="Reinhardt R."/>
            <person name="Schmidt M."/>
            <person name="Ullrich C."/>
            <person name="Stein T."/>
            <person name="Leenders F."/>
            <person name="Vater J."/>
        </authorList>
    </citation>
    <scope>NUCLEOTIDE SEQUENCE [GENOMIC DNA]</scope>
    <source>
        <strain>ATCC 6633 / PCI 219 / NRS 231</strain>
    </source>
</reference>
<name>MYCC_BACIU</name>
<accession>Q9R9I9</accession>
<sequence length="2609" mass="297946">MSEFKQQELFWSNMFDAEDRLIAFPSFHMSDSALEHDALNTSNSIHTSLRSDVSLRIMTMAIIPMAVYLVLLVGIKCLLHKYTGEESIIVGVPTFEDETDEDLRLDQIMLLKQNINENSTFKSIFNEFKHTLNDAILHQDVPFDKMVGPLNLNYNSNHLPMIPAIVSLDQIHLIHFKETAASDTLFQFDIKNDAIHLKVTYNEQAYDRQYMMQVIEHLNRLFSIILFQPDITISQLNILTDTEINTFKDYNQTAAEYPREKTIHQLFEEQANRTPDQVAVVYEENQLTYQELNEKANQIARTLQSEGVHPDQPVGIMAERSLEMIVGLFGILKAGGAYVPIDPTYPEERIRYILEDSDTKLLLVQHHLREKVPFTGKVLDMEDPQTFSEDGSNLESISGPNQLAYVIYTSGSTGKPKGVMVEHRSVINRLVWMQENYPLDERDAILQKTAITFDVSVWELFWWSIVGSKVVLLPNGGEKNPELILDTIEQKGVSTLHFVPAMLHAFLESMEQTPSGKLKRKLASLRYVFASGEALTPKHVDGFQRIITPVSHAQIINLYGPTEATIDVSYFECEADKRYNSVPIGKPISNIQLYILQAGYMQPVGVAGELCIAGDGLARGYLNRPELTAEKFVKNPFSAGERMYRTGDLARWLPDGNIEYLGRIDHQVKIRGYRIETGEVEAALFHIPSIQESIVLAQEINEEISLCAYYTANDTLTAGELREHLSRQLPSYMIPAYFIQLKRMPLTLNGKIDRRALPSPRENLTGMDYTAPRTELEKILAATWESVLGLERVGVSDHFFELGGDSIKSIQVSSRLYQAGYKFEIKHLFKYPTISELVPYVEPVTRVAEQGEIKGPALLTPIQHWFFDQRYPDLHHYNQAVMLYWKEGLNVPMLREVMRKIVEHHDALRMVYVPAKHGYEARNREIDEGDLFSLEVFSLLEENNVAQTIETLSNEIQQSIQLAEGPLIKLGLFQCQDGDHLLIVAHHLVIDGVSWRILIEDIAAAYEQLLNGEAIQLPKKTDSYLLWAEQLKRYAESPEFEMKNQYWFQHEHIPLPKLPKDNEQEIGLAEDRETIIVQWTAEETERLLKNAHRAYTTEMNDLLLTGLGIAIHRWTGHEDILIHLEGHGRESIIPDLDISRTVGWFTSQYPVFLPIKADHDISQRIKTVKEHLRKIPQKGIGYGIIKYLSDHREDREFTGQPEISFNFLGQFDQDLQNGSIEVSPYSSGKIASDKHPLTYALDINGMISNGRLSLAISYCGKQYHKETMETCADLLKSSLRQVIEHCTAQDQVQLTPSDISLKEISIDELDQFVQQAQHLGEIENIYPLTPMQKGMLFHSLIDSASGAYFEQAAFDLKGLLDIEAFMMSLSQLAKRYDILRTQFYTEWKEQPLQIVLRHKPIETVVEDIRDMNVDQRSEFIAAFARKDKERGFNLIRDALMRVSILRTDEEKARLIWSFHHILMDGWCLPLITKEVFETYYAIIERRQPKRDAVTPYRQYIEWLDEQDHEQAAVYWRDYLDDYEGQTVLLKEPFSDQARGYQKQKLACRLGKQLTEEIKRAASQHHVTVNTWMQTAWGLLLQRYNGTQDVVFGTVVSGRPADIPGIESMVGLFINTIPVRVCAQPEMTVAQVLKMNQEHALASQPYDTFPLYEIQAQTEQKQQLINHIMVFENYPVEKQMEHMKRDHDVLDISDFHLEEHTHYDFNFIVMPAEDMEMHFVYNANVYDQATVERIQAHFMEIIKQMVNDTAVHVQELDILSEDERSLLIEKFNDTATEYPKEKTIYQLFEEQAARTPEQIAIVFEDQKLTYRQLNEQANQLARTLRAKGVRSDRTAAIISDHSIELVVGILAVLKAGGAYVPIDPDYPEQRIQYILNDSKTEIVLTQSHLQQRLAHEGTIVLLDDENSYHKERSNLERISNIKDLAYVIYTSGSTGKPKGVLIEHQGLTNYIWWADRVYVKGEKTTFPLYSSIAFDLTVTSIFTPLISGNAIIVYGDKDRTTLLSSIIEDSRVDIIKLTPAHLQLLKEMNISPECTIRKMIVGGDNLSTRLAQNISEQFQDQIEIFNEYGPTETVVGCMIYLYDPKKDRQESVPIGTAAANMNIYLLDTGMKPVPIGVPGEMYISGAGVARGYLNRPDLTAEKFVEHPFAAGERMYKTGDAARWMPDGHMEYLGRIDHQVKVRGYRIELGEVEAALLLVESVKEAVVIAVEEEGSNQLCAYVTGDESLKTLQLKQQLQNKLPAYMIPAYFVQIEEMPLTANGKIDREALPAPDGNMLAGTEYAAPRTLIEKQLAEIWKEVLAHSELGIKDNFFDVGGHSLKVLQLVDQINKVMGIKLHYHVVYEAPTIETMAHAIQAAALPSKTENVFVKLNQNGSIPVFCFPPLIGYGLVYNEMANRLDGDCVVYAADFTEDPSYKKPIIDRFAESMIDIQEQGPFVLLGYSSGSNLAFEVAKALEQRGRTVSDVIMLDSQITTSVTHLSEKEVEEIIHLNLDIIPVYYRELLTIPSIKEKIRGYLAYHNQLINSGTINANIHHLLCDDMTERGWTHSTAHNYKEYELKGDHVTIFDPQYIEENMSTIRSIMKCIEEQQLGELVPHEQLSYMSRTKSDRT</sequence>
<dbReference type="EC" id="2.3.1.-"/>
<dbReference type="EMBL" id="AF184956">
    <property type="protein sequence ID" value="AAF08797.1"/>
    <property type="molecule type" value="Genomic_DNA"/>
</dbReference>
<dbReference type="PIR" id="T44808">
    <property type="entry name" value="T44808"/>
</dbReference>
<dbReference type="SMR" id="Q9R9I9"/>
<dbReference type="ESTHER" id="bacsu-MYCC">
    <property type="family name" value="Thioesterase"/>
</dbReference>
<dbReference type="GO" id="GO:0005829">
    <property type="term" value="C:cytosol"/>
    <property type="evidence" value="ECO:0007669"/>
    <property type="project" value="TreeGrafter"/>
</dbReference>
<dbReference type="GO" id="GO:0031177">
    <property type="term" value="F:phosphopantetheine binding"/>
    <property type="evidence" value="ECO:0007669"/>
    <property type="project" value="TreeGrafter"/>
</dbReference>
<dbReference type="GO" id="GO:0016740">
    <property type="term" value="F:transferase activity"/>
    <property type="evidence" value="ECO:0007669"/>
    <property type="project" value="UniProtKB-KW"/>
</dbReference>
<dbReference type="GO" id="GO:0043041">
    <property type="term" value="P:amino acid activation for nonribosomal peptide biosynthetic process"/>
    <property type="evidence" value="ECO:0007669"/>
    <property type="project" value="TreeGrafter"/>
</dbReference>
<dbReference type="GO" id="GO:0017000">
    <property type="term" value="P:antibiotic biosynthetic process"/>
    <property type="evidence" value="ECO:0007669"/>
    <property type="project" value="UniProtKB-KW"/>
</dbReference>
<dbReference type="GO" id="GO:0008610">
    <property type="term" value="P:lipid biosynthetic process"/>
    <property type="evidence" value="ECO:0007669"/>
    <property type="project" value="UniProtKB-ARBA"/>
</dbReference>
<dbReference type="GO" id="GO:0044550">
    <property type="term" value="P:secondary metabolite biosynthetic process"/>
    <property type="evidence" value="ECO:0007669"/>
    <property type="project" value="TreeGrafter"/>
</dbReference>
<dbReference type="CDD" id="cd05930">
    <property type="entry name" value="A_NRPS"/>
    <property type="match status" value="1"/>
</dbReference>
<dbReference type="CDD" id="cd17655">
    <property type="entry name" value="A_NRPS_Bac"/>
    <property type="match status" value="1"/>
</dbReference>
<dbReference type="CDD" id="cd19543">
    <property type="entry name" value="DCL_NRPS"/>
    <property type="match status" value="1"/>
</dbReference>
<dbReference type="CDD" id="cd19534">
    <property type="entry name" value="E_NRPS"/>
    <property type="match status" value="1"/>
</dbReference>
<dbReference type="FunFam" id="3.30.300.30:FF:000010">
    <property type="entry name" value="Enterobactin synthetase component F"/>
    <property type="match status" value="2"/>
</dbReference>
<dbReference type="FunFam" id="3.40.50.980:FF:000002">
    <property type="entry name" value="Enterobactin synthetase component F"/>
    <property type="match status" value="1"/>
</dbReference>
<dbReference type="FunFam" id="3.40.50.12780:FF:000012">
    <property type="entry name" value="Non-ribosomal peptide synthetase"/>
    <property type="match status" value="2"/>
</dbReference>
<dbReference type="FunFam" id="3.40.50.980:FF:000001">
    <property type="entry name" value="Non-ribosomal peptide synthetase"/>
    <property type="match status" value="2"/>
</dbReference>
<dbReference type="FunFam" id="2.30.38.10:FF:000001">
    <property type="entry name" value="Non-ribosomal peptide synthetase PvdI"/>
    <property type="match status" value="2"/>
</dbReference>
<dbReference type="FunFam" id="1.10.1200.10:FF:000005">
    <property type="entry name" value="Nonribosomal peptide synthetase 1"/>
    <property type="match status" value="2"/>
</dbReference>
<dbReference type="Gene3D" id="3.30.300.30">
    <property type="match status" value="2"/>
</dbReference>
<dbReference type="Gene3D" id="3.40.50.980">
    <property type="match status" value="4"/>
</dbReference>
<dbReference type="Gene3D" id="1.10.1200.10">
    <property type="entry name" value="ACP-like"/>
    <property type="match status" value="2"/>
</dbReference>
<dbReference type="Gene3D" id="3.40.50.1820">
    <property type="entry name" value="alpha/beta hydrolase"/>
    <property type="match status" value="1"/>
</dbReference>
<dbReference type="Gene3D" id="3.30.559.10">
    <property type="entry name" value="Chloramphenicol acetyltransferase-like domain"/>
    <property type="match status" value="2"/>
</dbReference>
<dbReference type="Gene3D" id="1.10.287.490">
    <property type="entry name" value="Helix hairpin bin"/>
    <property type="match status" value="1"/>
</dbReference>
<dbReference type="Gene3D" id="2.30.38.10">
    <property type="entry name" value="Luciferase, Domain 3"/>
    <property type="match status" value="2"/>
</dbReference>
<dbReference type="Gene3D" id="3.30.559.30">
    <property type="entry name" value="Nonribosomal peptide synthetase, condensation domain"/>
    <property type="match status" value="3"/>
</dbReference>
<dbReference type="InterPro" id="IPR010071">
    <property type="entry name" value="AA_adenyl_dom"/>
</dbReference>
<dbReference type="InterPro" id="IPR029058">
    <property type="entry name" value="AB_hydrolase_fold"/>
</dbReference>
<dbReference type="InterPro" id="IPR036736">
    <property type="entry name" value="ACP-like_sf"/>
</dbReference>
<dbReference type="InterPro" id="IPR025110">
    <property type="entry name" value="AMP-bd_C"/>
</dbReference>
<dbReference type="InterPro" id="IPR045851">
    <property type="entry name" value="AMP-bd_C_sf"/>
</dbReference>
<dbReference type="InterPro" id="IPR020845">
    <property type="entry name" value="AMP-binding_CS"/>
</dbReference>
<dbReference type="InterPro" id="IPR000873">
    <property type="entry name" value="AMP-dep_synth/lig_dom"/>
</dbReference>
<dbReference type="InterPro" id="IPR023213">
    <property type="entry name" value="CAT-like_dom_sf"/>
</dbReference>
<dbReference type="InterPro" id="IPR001242">
    <property type="entry name" value="Condensatn"/>
</dbReference>
<dbReference type="InterPro" id="IPR010060">
    <property type="entry name" value="NRPS_synth"/>
</dbReference>
<dbReference type="InterPro" id="IPR020802">
    <property type="entry name" value="PKS_thioesterase"/>
</dbReference>
<dbReference type="InterPro" id="IPR009081">
    <property type="entry name" value="PP-bd_ACP"/>
</dbReference>
<dbReference type="InterPro" id="IPR006162">
    <property type="entry name" value="Ppantetheine_attach_site"/>
</dbReference>
<dbReference type="InterPro" id="IPR001031">
    <property type="entry name" value="Thioesterase"/>
</dbReference>
<dbReference type="NCBIfam" id="TIGR01733">
    <property type="entry name" value="AA-adenyl-dom"/>
    <property type="match status" value="2"/>
</dbReference>
<dbReference type="NCBIfam" id="TIGR01720">
    <property type="entry name" value="NRPS-para261"/>
    <property type="match status" value="1"/>
</dbReference>
<dbReference type="NCBIfam" id="NF003417">
    <property type="entry name" value="PRK04813.1"/>
    <property type="match status" value="2"/>
</dbReference>
<dbReference type="PANTHER" id="PTHR45527">
    <property type="entry name" value="NONRIBOSOMAL PEPTIDE SYNTHETASE"/>
    <property type="match status" value="1"/>
</dbReference>
<dbReference type="PANTHER" id="PTHR45527:SF14">
    <property type="entry name" value="PLIPASTATIN SYNTHASE SUBUNIT B"/>
    <property type="match status" value="1"/>
</dbReference>
<dbReference type="Pfam" id="PF00501">
    <property type="entry name" value="AMP-binding"/>
    <property type="match status" value="2"/>
</dbReference>
<dbReference type="Pfam" id="PF13193">
    <property type="entry name" value="AMP-binding_C"/>
    <property type="match status" value="2"/>
</dbReference>
<dbReference type="Pfam" id="PF00668">
    <property type="entry name" value="Condensation"/>
    <property type="match status" value="3"/>
</dbReference>
<dbReference type="Pfam" id="PF00550">
    <property type="entry name" value="PP-binding"/>
    <property type="match status" value="2"/>
</dbReference>
<dbReference type="Pfam" id="PF00975">
    <property type="entry name" value="Thioesterase"/>
    <property type="match status" value="1"/>
</dbReference>
<dbReference type="SMART" id="SM00824">
    <property type="entry name" value="PKS_TE"/>
    <property type="match status" value="1"/>
</dbReference>
<dbReference type="SUPFAM" id="SSF56801">
    <property type="entry name" value="Acetyl-CoA synthetase-like"/>
    <property type="match status" value="2"/>
</dbReference>
<dbReference type="SUPFAM" id="SSF47336">
    <property type="entry name" value="ACP-like"/>
    <property type="match status" value="2"/>
</dbReference>
<dbReference type="SUPFAM" id="SSF53474">
    <property type="entry name" value="alpha/beta-Hydrolases"/>
    <property type="match status" value="1"/>
</dbReference>
<dbReference type="SUPFAM" id="SSF52777">
    <property type="entry name" value="CoA-dependent acyltransferases"/>
    <property type="match status" value="5"/>
</dbReference>
<dbReference type="PROSITE" id="PS00455">
    <property type="entry name" value="AMP_BINDING"/>
    <property type="match status" value="2"/>
</dbReference>
<dbReference type="PROSITE" id="PS50075">
    <property type="entry name" value="CARRIER"/>
    <property type="match status" value="2"/>
</dbReference>
<dbReference type="PROSITE" id="PS00012">
    <property type="entry name" value="PHOSPHOPANTETHEINE"/>
    <property type="match status" value="2"/>
</dbReference>
<comment type="function">
    <text>This protein is a multifunctional enzyme, able to activate and polymerize the amino acids Ser and Asn as part of the synthesis of mycosubtilin. The Ser residue is further epimerized to the D-isomer form. The activation sites for these amino acids consist of individual domains.</text>
</comment>
<comment type="cofactor">
    <cofactor evidence="2">
        <name>pantetheine 4'-phosphate</name>
        <dbReference type="ChEBI" id="CHEBI:47942"/>
    </cofactor>
    <text evidence="2">Binds 2 phosphopantetheines covalently.</text>
</comment>
<comment type="similarity">
    <text evidence="2">Belongs to the ATP-dependent AMP-binding enzyme family.</text>
</comment>
<gene>
    <name type="primary">mycC</name>
</gene>
<keyword id="KW-0045">Antibiotic biosynthesis</keyword>
<keyword id="KW-0511">Multifunctional enzyme</keyword>
<keyword id="KW-0596">Phosphopantetheine</keyword>
<keyword id="KW-0597">Phosphoprotein</keyword>
<keyword id="KW-0677">Repeat</keyword>
<keyword id="KW-0808">Transferase</keyword>
<evidence type="ECO:0000255" key="1">
    <source>
        <dbReference type="PROSITE-ProRule" id="PRU00258"/>
    </source>
</evidence>
<evidence type="ECO:0000305" key="2"/>